<gene>
    <name type="primary">copA</name>
    <name type="synonym">incA</name>
    <name type="synonym">repA3</name>
</gene>
<sequence length="61" mass="7252">MWIYRSQKSKNPDNLLQLWRVRKDYRGPLKPYSQQFSYAGSIVICPEKFKTSFCARSFCAL</sequence>
<accession>P13946</accession>
<geneLocation type="plasmid">
    <name>R6-5</name>
</geneLocation>
<geneLocation type="plasmid">
    <name>IncFII R100</name>
    <name>NR1</name>
</geneLocation>
<geneLocation type="plasmid">
    <name>IncFII R1-19</name>
    <name>R1 drd-19</name>
</geneLocation>
<dbReference type="EMBL" id="V00318">
    <property type="protein sequence ID" value="CAA23609.1"/>
    <property type="molecule type" value="Genomic_DNA"/>
</dbReference>
<dbReference type="EMBL" id="V00319">
    <property type="protein sequence ID" value="CAA23610.1"/>
    <property type="molecule type" value="Genomic_DNA"/>
</dbReference>
<dbReference type="EMBL" id="X02302">
    <property type="protein sequence ID" value="CAA26167.1"/>
    <property type="molecule type" value="Genomic_DNA"/>
</dbReference>
<dbReference type="EMBL" id="V00326">
    <property type="protein sequence ID" value="CAA23617.1"/>
    <property type="molecule type" value="Genomic_DNA"/>
</dbReference>
<dbReference type="RefSeq" id="WP_012615301.1">
    <property type="nucleotide sequence ID" value="NZ_PP130096.1"/>
</dbReference>
<dbReference type="RefSeq" id="YP_002456234.1">
    <property type="nucleotide sequence ID" value="NC_011812.1"/>
</dbReference>
<dbReference type="RefSeq" id="YP_003108324.1">
    <property type="nucleotide sequence ID" value="NC_013122.1"/>
</dbReference>
<dbReference type="RefSeq" id="YP_004869997.1">
    <property type="nucleotide sequence ID" value="NC_016039.1"/>
</dbReference>
<dbReference type="RefSeq" id="YP_006952183.1">
    <property type="nucleotide sequence ID" value="NC_019057.1"/>
</dbReference>
<dbReference type="RefSeq" id="YP_006953266.1">
    <property type="nucleotide sequence ID" value="NC_019071.1"/>
</dbReference>
<dbReference type="RefSeq" id="YP_006953364.1">
    <property type="nucleotide sequence ID" value="NC_019072.1"/>
</dbReference>
<dbReference type="RefSeq" id="YP_006953886.1">
    <property type="nucleotide sequence ID" value="NC_019090.1"/>
</dbReference>
<dbReference type="RefSeq" id="YP_006990698.1">
    <property type="nucleotide sequence ID" value="NC_019424.1"/>
</dbReference>
<dbReference type="RefSeq" id="YP_007447500.1">
    <property type="nucleotide sequence ID" value="NC_020278.2"/>
</dbReference>
<dbReference type="RefSeq" id="YP_009066514.1">
    <property type="nucleotide sequence ID" value="NC_025106.1"/>
</dbReference>
<dbReference type="GO" id="GO:0006276">
    <property type="term" value="P:plasmid maintenance"/>
    <property type="evidence" value="ECO:0007669"/>
    <property type="project" value="UniProtKB-KW"/>
</dbReference>
<name>COPA2_ECOLX</name>
<organism>
    <name type="scientific">Escherichia coli</name>
    <dbReference type="NCBI Taxonomy" id="562"/>
    <lineage>
        <taxon>Bacteria</taxon>
        <taxon>Pseudomonadati</taxon>
        <taxon>Pseudomonadota</taxon>
        <taxon>Gammaproteobacteria</taxon>
        <taxon>Enterobacterales</taxon>
        <taxon>Enterobacteriaceae</taxon>
        <taxon>Escherichia</taxon>
    </lineage>
</organism>
<keyword id="KW-0614">Plasmid</keyword>
<keyword id="KW-0615">Plasmid copy control</keyword>
<comment type="function">
    <text>Controls the copy number in gene replication.</text>
</comment>
<reference key="1">
    <citation type="journal article" date="1981" name="Proc. Natl. Acad. Sci. U.S.A.">
        <title>Regulation of DNA replication: 'target' determinant of the replication control elements of plasmid R6-5 lies within a control element gene.</title>
        <authorList>
            <person name="Danbara H."/>
            <person name="Brady G."/>
            <person name="Timmis J.K."/>
            <person name="Timmis K.N."/>
        </authorList>
    </citation>
    <scope>NUCLEOTIDE SEQUENCE [GENOMIC DNA]</scope>
    <source>
        <plasmid>R6-5</plasmid>
    </source>
</reference>
<reference key="2">
    <citation type="journal article" date="1983" name="J. Bacteriol.">
        <title>Replication control mutations of plasmid R6-5 and their effects on interactions of the RNA-I control element with its target.</title>
        <authorList>
            <person name="Brady G."/>
            <person name="Frey J."/>
            <person name="Danbara H."/>
            <person name="Timmis K.N."/>
        </authorList>
    </citation>
    <scope>NUCLEOTIDE SEQUENCE [GENOMIC DNA]</scope>
    <source>
        <plasmid>R6-5</plasmid>
    </source>
</reference>
<reference key="3">
    <citation type="journal article" date="1985" name="J. Mol. Biol.">
        <title>Transcription of the replication control region of the IncFII R-plasmid NR1 in vitro and in vivo.</title>
        <authorList>
            <person name="Womble D.D."/>
            <person name="Sampathkumar P."/>
            <person name="Easton A.M."/>
            <person name="Luckow V.A."/>
            <person name="Rownd R.H."/>
        </authorList>
    </citation>
    <scope>NUCLEOTIDE SEQUENCE [GENOMIC DNA]</scope>
    <source>
        <plasmid>IncFII R100 (NR1)</plasmid>
    </source>
</reference>
<reference key="4">
    <citation type="journal article" date="1981" name="Mol. Gen. Genet.">
        <title>The nucleotide sequence of the replication control region of the resistance plasmid R1drd-19.</title>
        <authorList>
            <person name="Stougaard P."/>
            <person name="Molin S."/>
            <person name="Nordstroem K."/>
            <person name="Hansen F.G."/>
        </authorList>
    </citation>
    <scope>NUCLEOTIDE SEQUENCE [GENOMIC DNA]</scope>
    <source>
        <plasmid>IncFII R1-19 (R1 drd-19)</plasmid>
    </source>
</reference>
<protein>
    <recommendedName>
        <fullName>Protein CopA/IncA</fullName>
    </recommendedName>
    <alternativeName>
        <fullName>Protein RepA3</fullName>
    </alternativeName>
</protein>
<proteinExistence type="predicted"/>
<feature type="chain" id="PRO_0000068289" description="Protein CopA/IncA">
    <location>
        <begin position="1"/>
        <end position="61"/>
    </location>
</feature>